<name>DNAK_RUMCH</name>
<dbReference type="EMBL" id="CP001348">
    <property type="protein sequence ID" value="ACL76148.1"/>
    <property type="molecule type" value="Genomic_DNA"/>
</dbReference>
<dbReference type="RefSeq" id="WP_015925263.1">
    <property type="nucleotide sequence ID" value="NC_011898.1"/>
</dbReference>
<dbReference type="SMR" id="B8I305"/>
<dbReference type="STRING" id="394503.Ccel_1798"/>
<dbReference type="KEGG" id="cce:Ccel_1798"/>
<dbReference type="eggNOG" id="COG0443">
    <property type="taxonomic scope" value="Bacteria"/>
</dbReference>
<dbReference type="HOGENOM" id="CLU_005965_2_1_9"/>
<dbReference type="OrthoDB" id="9766019at2"/>
<dbReference type="Proteomes" id="UP000001349">
    <property type="component" value="Chromosome"/>
</dbReference>
<dbReference type="GO" id="GO:0005524">
    <property type="term" value="F:ATP binding"/>
    <property type="evidence" value="ECO:0007669"/>
    <property type="project" value="UniProtKB-UniRule"/>
</dbReference>
<dbReference type="GO" id="GO:0140662">
    <property type="term" value="F:ATP-dependent protein folding chaperone"/>
    <property type="evidence" value="ECO:0007669"/>
    <property type="project" value="InterPro"/>
</dbReference>
<dbReference type="GO" id="GO:0051082">
    <property type="term" value="F:unfolded protein binding"/>
    <property type="evidence" value="ECO:0007669"/>
    <property type="project" value="InterPro"/>
</dbReference>
<dbReference type="CDD" id="cd10234">
    <property type="entry name" value="ASKHA_NBD_HSP70_DnaK-like"/>
    <property type="match status" value="1"/>
</dbReference>
<dbReference type="FunFam" id="2.60.34.10:FF:000014">
    <property type="entry name" value="Chaperone protein DnaK HSP70"/>
    <property type="match status" value="1"/>
</dbReference>
<dbReference type="FunFam" id="1.20.1270.10:FF:000001">
    <property type="entry name" value="Molecular chaperone DnaK"/>
    <property type="match status" value="1"/>
</dbReference>
<dbReference type="FunFam" id="3.30.420.40:FF:000071">
    <property type="entry name" value="Molecular chaperone DnaK"/>
    <property type="match status" value="1"/>
</dbReference>
<dbReference type="FunFam" id="3.90.640.10:FF:000003">
    <property type="entry name" value="Molecular chaperone DnaK"/>
    <property type="match status" value="1"/>
</dbReference>
<dbReference type="Gene3D" id="1.20.1270.10">
    <property type="match status" value="1"/>
</dbReference>
<dbReference type="Gene3D" id="3.30.420.40">
    <property type="match status" value="2"/>
</dbReference>
<dbReference type="Gene3D" id="3.90.640.10">
    <property type="entry name" value="Actin, Chain A, domain 4"/>
    <property type="match status" value="1"/>
</dbReference>
<dbReference type="Gene3D" id="2.60.34.10">
    <property type="entry name" value="Substrate Binding Domain Of DNAk, Chain A, domain 1"/>
    <property type="match status" value="1"/>
</dbReference>
<dbReference type="HAMAP" id="MF_00332">
    <property type="entry name" value="DnaK"/>
    <property type="match status" value="1"/>
</dbReference>
<dbReference type="InterPro" id="IPR043129">
    <property type="entry name" value="ATPase_NBD"/>
</dbReference>
<dbReference type="InterPro" id="IPR012725">
    <property type="entry name" value="Chaperone_DnaK"/>
</dbReference>
<dbReference type="InterPro" id="IPR018181">
    <property type="entry name" value="Heat_shock_70_CS"/>
</dbReference>
<dbReference type="InterPro" id="IPR029048">
    <property type="entry name" value="HSP70_C_sf"/>
</dbReference>
<dbReference type="InterPro" id="IPR029047">
    <property type="entry name" value="HSP70_peptide-bd_sf"/>
</dbReference>
<dbReference type="InterPro" id="IPR013126">
    <property type="entry name" value="Hsp_70_fam"/>
</dbReference>
<dbReference type="NCBIfam" id="NF001413">
    <property type="entry name" value="PRK00290.1"/>
    <property type="match status" value="1"/>
</dbReference>
<dbReference type="NCBIfam" id="TIGR02350">
    <property type="entry name" value="prok_dnaK"/>
    <property type="match status" value="1"/>
</dbReference>
<dbReference type="PANTHER" id="PTHR19375">
    <property type="entry name" value="HEAT SHOCK PROTEIN 70KDA"/>
    <property type="match status" value="1"/>
</dbReference>
<dbReference type="Pfam" id="PF00012">
    <property type="entry name" value="HSP70"/>
    <property type="match status" value="1"/>
</dbReference>
<dbReference type="PRINTS" id="PR00301">
    <property type="entry name" value="HEATSHOCK70"/>
</dbReference>
<dbReference type="SUPFAM" id="SSF53067">
    <property type="entry name" value="Actin-like ATPase domain"/>
    <property type="match status" value="2"/>
</dbReference>
<dbReference type="SUPFAM" id="SSF100934">
    <property type="entry name" value="Heat shock protein 70kD (HSP70), C-terminal subdomain"/>
    <property type="match status" value="1"/>
</dbReference>
<dbReference type="SUPFAM" id="SSF100920">
    <property type="entry name" value="Heat shock protein 70kD (HSP70), peptide-binding domain"/>
    <property type="match status" value="1"/>
</dbReference>
<dbReference type="PROSITE" id="PS00297">
    <property type="entry name" value="HSP70_1"/>
    <property type="match status" value="1"/>
</dbReference>
<dbReference type="PROSITE" id="PS00329">
    <property type="entry name" value="HSP70_2"/>
    <property type="match status" value="1"/>
</dbReference>
<dbReference type="PROSITE" id="PS01036">
    <property type="entry name" value="HSP70_3"/>
    <property type="match status" value="1"/>
</dbReference>
<proteinExistence type="inferred from homology"/>
<accession>B8I305</accession>
<keyword id="KW-0067">ATP-binding</keyword>
<keyword id="KW-0143">Chaperone</keyword>
<keyword id="KW-0547">Nucleotide-binding</keyword>
<keyword id="KW-0597">Phosphoprotein</keyword>
<keyword id="KW-1185">Reference proteome</keyword>
<keyword id="KW-0346">Stress response</keyword>
<evidence type="ECO:0000255" key="1">
    <source>
        <dbReference type="HAMAP-Rule" id="MF_00332"/>
    </source>
</evidence>
<evidence type="ECO:0000256" key="2">
    <source>
        <dbReference type="SAM" id="MobiDB-lite"/>
    </source>
</evidence>
<feature type="chain" id="PRO_1000133139" description="Chaperone protein DnaK">
    <location>
        <begin position="1"/>
        <end position="616"/>
    </location>
</feature>
<feature type="region of interest" description="Disordered" evidence="2">
    <location>
        <begin position="575"/>
        <end position="616"/>
    </location>
</feature>
<feature type="compositionally biased region" description="Basic and acidic residues" evidence="2">
    <location>
        <begin position="607"/>
        <end position="616"/>
    </location>
</feature>
<feature type="modified residue" description="Phosphothreonine; by autocatalysis" evidence="1">
    <location>
        <position position="174"/>
    </location>
</feature>
<protein>
    <recommendedName>
        <fullName evidence="1">Chaperone protein DnaK</fullName>
    </recommendedName>
    <alternativeName>
        <fullName evidence="1">HSP70</fullName>
    </alternativeName>
    <alternativeName>
        <fullName evidence="1">Heat shock 70 kDa protein</fullName>
    </alternativeName>
    <alternativeName>
        <fullName evidence="1">Heat shock protein 70</fullName>
    </alternativeName>
</protein>
<organism>
    <name type="scientific">Ruminiclostridium cellulolyticum (strain ATCC 35319 / DSM 5812 / JCM 6584 / H10)</name>
    <name type="common">Clostridium cellulolyticum</name>
    <dbReference type="NCBI Taxonomy" id="394503"/>
    <lineage>
        <taxon>Bacteria</taxon>
        <taxon>Bacillati</taxon>
        <taxon>Bacillota</taxon>
        <taxon>Clostridia</taxon>
        <taxon>Eubacteriales</taxon>
        <taxon>Oscillospiraceae</taxon>
        <taxon>Ruminiclostridium</taxon>
    </lineage>
</organism>
<gene>
    <name evidence="1" type="primary">dnaK</name>
    <name type="ordered locus">Ccel_1798</name>
</gene>
<reference key="1">
    <citation type="submission" date="2009-01" db="EMBL/GenBank/DDBJ databases">
        <title>Complete sequence of Clostridium cellulolyticum H10.</title>
        <authorList>
            <consortium name="US DOE Joint Genome Institute"/>
            <person name="Lucas S."/>
            <person name="Copeland A."/>
            <person name="Lapidus A."/>
            <person name="Glavina del Rio T."/>
            <person name="Dalin E."/>
            <person name="Tice H."/>
            <person name="Bruce D."/>
            <person name="Goodwin L."/>
            <person name="Pitluck S."/>
            <person name="Chertkov O."/>
            <person name="Saunders E."/>
            <person name="Brettin T."/>
            <person name="Detter J.C."/>
            <person name="Han C."/>
            <person name="Larimer F."/>
            <person name="Land M."/>
            <person name="Hauser L."/>
            <person name="Kyrpides N."/>
            <person name="Ivanova N."/>
            <person name="Zhou J."/>
            <person name="Richardson P."/>
        </authorList>
    </citation>
    <scope>NUCLEOTIDE SEQUENCE [LARGE SCALE GENOMIC DNA]</scope>
    <source>
        <strain>ATCC 35319 / DSM 5812 / JCM 6584 / H10</strain>
    </source>
</reference>
<comment type="function">
    <text evidence="1">Acts as a chaperone.</text>
</comment>
<comment type="induction">
    <text evidence="1">By stress conditions e.g. heat shock.</text>
</comment>
<comment type="similarity">
    <text evidence="1">Belongs to the heat shock protein 70 family.</text>
</comment>
<sequence>MAKVIGIDLGTTNSCVAVMEGGEPIVIANPEGNRTTPSVVAFSKTGERMTGQVAKRQAITNPERTIISIKRDMGTDHKVDIDGKKFSPQEISSMILQKLKSDAEAYLGETVTQAVITVPAYFSDAQRQATKDSGKIAGLEVLRIINEPTAAALAYGLDKEHDQKIMVYDLGGGTFDVSILEIGDGVFEVLATNGNNKLGGDDFDQRIIDFLVDTFKKESGIDLKNDKMAMQRLKEAAEKAKVELSGVTSSNINLPFITADASGPKHLDVTLTRAKFDEITADLVENTMVPTRQAMQDAGLTPDKIDKILLVGGSTRIPAVQEAVKKYLGKDPFKGINPDECVAVGAAIQAGVLTGDVTGLLLLDVTPLSLGLETLGGVFTKLIERNTTIPTKKSQVFSTAADGQTSVEIHVLQGEREMAQYNKSLGRFQLTGIPSAPRGVPQIEVTFDIDANGIVHVSAKDLGTGNEQKITITASTNLSDSDIDKAVKEAEKFAAEDKQRKEEIDVRNNADSLIYQSEKSLKDLGDKVSADDKSKIESGVNKVKDALKGTDIEVIKKATEELQQSFYDISSKIYQQTQGAQSDPGAAGFGGQQEAPGAGQDENVVDADYKVVDDDK</sequence>